<keyword id="KW-0067">ATP-binding</keyword>
<keyword id="KW-0963">Cytoplasm</keyword>
<keyword id="KW-0275">Fatty acid biosynthesis</keyword>
<keyword id="KW-0276">Fatty acid metabolism</keyword>
<keyword id="KW-0444">Lipid biosynthesis</keyword>
<keyword id="KW-0443">Lipid metabolism</keyword>
<keyword id="KW-0479">Metal-binding</keyword>
<keyword id="KW-0547">Nucleotide-binding</keyword>
<keyword id="KW-0808">Transferase</keyword>
<keyword id="KW-0862">Zinc</keyword>
<keyword id="KW-0863">Zinc-finger</keyword>
<dbReference type="EC" id="2.1.3.15" evidence="1"/>
<dbReference type="EMBL" id="CP000554">
    <property type="protein sequence ID" value="ABM78473.1"/>
    <property type="molecule type" value="Genomic_DNA"/>
</dbReference>
<dbReference type="RefSeq" id="WP_011129913.1">
    <property type="nucleotide sequence ID" value="NC_008820.1"/>
</dbReference>
<dbReference type="SMR" id="A2CAG3"/>
<dbReference type="STRING" id="59922.P9303_17311"/>
<dbReference type="KEGG" id="pmf:P9303_17311"/>
<dbReference type="HOGENOM" id="CLU_015486_1_1_3"/>
<dbReference type="BioCyc" id="PMAR59922:G1G80-1500-MONOMER"/>
<dbReference type="UniPathway" id="UPA00655">
    <property type="reaction ID" value="UER00711"/>
</dbReference>
<dbReference type="Proteomes" id="UP000002274">
    <property type="component" value="Chromosome"/>
</dbReference>
<dbReference type="GO" id="GO:0009317">
    <property type="term" value="C:acetyl-CoA carboxylase complex"/>
    <property type="evidence" value="ECO:0007669"/>
    <property type="project" value="InterPro"/>
</dbReference>
<dbReference type="GO" id="GO:0003989">
    <property type="term" value="F:acetyl-CoA carboxylase activity"/>
    <property type="evidence" value="ECO:0007669"/>
    <property type="project" value="InterPro"/>
</dbReference>
<dbReference type="GO" id="GO:0005524">
    <property type="term" value="F:ATP binding"/>
    <property type="evidence" value="ECO:0007669"/>
    <property type="project" value="UniProtKB-KW"/>
</dbReference>
<dbReference type="GO" id="GO:0016743">
    <property type="term" value="F:carboxyl- or carbamoyltransferase activity"/>
    <property type="evidence" value="ECO:0007669"/>
    <property type="project" value="UniProtKB-UniRule"/>
</dbReference>
<dbReference type="GO" id="GO:0008270">
    <property type="term" value="F:zinc ion binding"/>
    <property type="evidence" value="ECO:0007669"/>
    <property type="project" value="UniProtKB-UniRule"/>
</dbReference>
<dbReference type="GO" id="GO:0006633">
    <property type="term" value="P:fatty acid biosynthetic process"/>
    <property type="evidence" value="ECO:0007669"/>
    <property type="project" value="UniProtKB-KW"/>
</dbReference>
<dbReference type="GO" id="GO:2001295">
    <property type="term" value="P:malonyl-CoA biosynthetic process"/>
    <property type="evidence" value="ECO:0007669"/>
    <property type="project" value="UniProtKB-UniRule"/>
</dbReference>
<dbReference type="Gene3D" id="3.90.226.10">
    <property type="entry name" value="2-enoyl-CoA Hydratase, Chain A, domain 1"/>
    <property type="match status" value="1"/>
</dbReference>
<dbReference type="HAMAP" id="MF_01395">
    <property type="entry name" value="AcetylCoA_CT_beta"/>
    <property type="match status" value="1"/>
</dbReference>
<dbReference type="InterPro" id="IPR034733">
    <property type="entry name" value="AcCoA_carboxyl_beta"/>
</dbReference>
<dbReference type="InterPro" id="IPR000438">
    <property type="entry name" value="Acetyl_CoA_COase_Trfase_b_su"/>
</dbReference>
<dbReference type="InterPro" id="IPR029045">
    <property type="entry name" value="ClpP/crotonase-like_dom_sf"/>
</dbReference>
<dbReference type="InterPro" id="IPR011762">
    <property type="entry name" value="COA_CT_N"/>
</dbReference>
<dbReference type="InterPro" id="IPR041010">
    <property type="entry name" value="Znf-ACC"/>
</dbReference>
<dbReference type="NCBIfam" id="TIGR00515">
    <property type="entry name" value="accD"/>
    <property type="match status" value="1"/>
</dbReference>
<dbReference type="PANTHER" id="PTHR42995">
    <property type="entry name" value="ACETYL-COENZYME A CARBOXYLASE CARBOXYL TRANSFERASE SUBUNIT BETA, CHLOROPLASTIC"/>
    <property type="match status" value="1"/>
</dbReference>
<dbReference type="PANTHER" id="PTHR42995:SF5">
    <property type="entry name" value="ACETYL-COENZYME A CARBOXYLASE CARBOXYL TRANSFERASE SUBUNIT BETA, CHLOROPLASTIC"/>
    <property type="match status" value="1"/>
</dbReference>
<dbReference type="Pfam" id="PF01039">
    <property type="entry name" value="Carboxyl_trans"/>
    <property type="match status" value="1"/>
</dbReference>
<dbReference type="Pfam" id="PF17848">
    <property type="entry name" value="Zn_ribbon_ACC"/>
    <property type="match status" value="1"/>
</dbReference>
<dbReference type="PRINTS" id="PR01070">
    <property type="entry name" value="ACCCTRFRASEB"/>
</dbReference>
<dbReference type="SUPFAM" id="SSF52096">
    <property type="entry name" value="ClpP/crotonase"/>
    <property type="match status" value="1"/>
</dbReference>
<dbReference type="PROSITE" id="PS50980">
    <property type="entry name" value="COA_CT_NTER"/>
    <property type="match status" value="1"/>
</dbReference>
<protein>
    <recommendedName>
        <fullName evidence="1">Acetyl-coenzyme A carboxylase carboxyl transferase subunit beta</fullName>
        <shortName evidence="1">ACCase subunit beta</shortName>
        <shortName evidence="1">Acetyl-CoA carboxylase carboxyltransferase subunit beta</shortName>
        <ecNumber evidence="1">2.1.3.15</ecNumber>
    </recommendedName>
</protein>
<name>ACCD_PROM3</name>
<proteinExistence type="inferred from homology"/>
<accession>A2CAG3</accession>
<organism>
    <name type="scientific">Prochlorococcus marinus (strain MIT 9303)</name>
    <dbReference type="NCBI Taxonomy" id="59922"/>
    <lineage>
        <taxon>Bacteria</taxon>
        <taxon>Bacillati</taxon>
        <taxon>Cyanobacteriota</taxon>
        <taxon>Cyanophyceae</taxon>
        <taxon>Synechococcales</taxon>
        <taxon>Prochlorococcaceae</taxon>
        <taxon>Prochlorococcus</taxon>
    </lineage>
</organism>
<reference key="1">
    <citation type="journal article" date="2007" name="PLoS Genet.">
        <title>Patterns and implications of gene gain and loss in the evolution of Prochlorococcus.</title>
        <authorList>
            <person name="Kettler G.C."/>
            <person name="Martiny A.C."/>
            <person name="Huang K."/>
            <person name="Zucker J."/>
            <person name="Coleman M.L."/>
            <person name="Rodrigue S."/>
            <person name="Chen F."/>
            <person name="Lapidus A."/>
            <person name="Ferriera S."/>
            <person name="Johnson J."/>
            <person name="Steglich C."/>
            <person name="Church G.M."/>
            <person name="Richardson P."/>
            <person name="Chisholm S.W."/>
        </authorList>
    </citation>
    <scope>NUCLEOTIDE SEQUENCE [LARGE SCALE GENOMIC DNA]</scope>
    <source>
        <strain>MIT 9303</strain>
    </source>
</reference>
<evidence type="ECO:0000255" key="1">
    <source>
        <dbReference type="HAMAP-Rule" id="MF_01395"/>
    </source>
</evidence>
<evidence type="ECO:0000255" key="2">
    <source>
        <dbReference type="PROSITE-ProRule" id="PRU01136"/>
    </source>
</evidence>
<gene>
    <name evidence="1" type="primary">accD</name>
    <name type="ordered locus">P9303_17311</name>
</gene>
<sequence length="293" mass="32212">MSLFDWFADRRKGQFVGKVSQETEESDGLWVKCPECGQVVYRKDLHANASVCSNCGYHHRIDSDERIVLIADQGSFKSLDRNLSPTDPLGFKDRRAYADRLRESQASTGMKDGVVTGLCQVEGMPMAMAVMDFRFMGGSMGSVVGEKITRLVERATAQGLPLLIVCASGGARMQEGMLSLMQMAKISGALERHREAELLYMPLLTHPTTGGVTASFAMLGDLILAEPKALIGFAGRRVIEQTLREKLPDNFQTAEYLQEHGFVDTIVPRTQLRKTLASLLLLHGCKAKKAAGK</sequence>
<feature type="chain" id="PRO_0000359022" description="Acetyl-coenzyme A carboxylase carboxyl transferase subunit beta">
    <location>
        <begin position="1"/>
        <end position="293"/>
    </location>
</feature>
<feature type="domain" description="CoA carboxyltransferase N-terminal" evidence="2">
    <location>
        <begin position="29"/>
        <end position="293"/>
    </location>
</feature>
<feature type="zinc finger region" description="C4-type" evidence="1">
    <location>
        <begin position="33"/>
        <end position="55"/>
    </location>
</feature>
<feature type="binding site" evidence="1">
    <location>
        <position position="33"/>
    </location>
    <ligand>
        <name>Zn(2+)</name>
        <dbReference type="ChEBI" id="CHEBI:29105"/>
    </ligand>
</feature>
<feature type="binding site" evidence="1">
    <location>
        <position position="36"/>
    </location>
    <ligand>
        <name>Zn(2+)</name>
        <dbReference type="ChEBI" id="CHEBI:29105"/>
    </ligand>
</feature>
<feature type="binding site" evidence="1">
    <location>
        <position position="52"/>
    </location>
    <ligand>
        <name>Zn(2+)</name>
        <dbReference type="ChEBI" id="CHEBI:29105"/>
    </ligand>
</feature>
<feature type="binding site" evidence="1">
    <location>
        <position position="55"/>
    </location>
    <ligand>
        <name>Zn(2+)</name>
        <dbReference type="ChEBI" id="CHEBI:29105"/>
    </ligand>
</feature>
<comment type="function">
    <text evidence="1">Component of the acetyl coenzyme A carboxylase (ACC) complex. Biotin carboxylase (BC) catalyzes the carboxylation of biotin on its carrier protein (BCCP) and then the CO(2) group is transferred by the transcarboxylase to acetyl-CoA to form malonyl-CoA.</text>
</comment>
<comment type="catalytic activity">
    <reaction evidence="1">
        <text>N(6)-carboxybiotinyl-L-lysyl-[protein] + acetyl-CoA = N(6)-biotinyl-L-lysyl-[protein] + malonyl-CoA</text>
        <dbReference type="Rhea" id="RHEA:54728"/>
        <dbReference type="Rhea" id="RHEA-COMP:10505"/>
        <dbReference type="Rhea" id="RHEA-COMP:10506"/>
        <dbReference type="ChEBI" id="CHEBI:57288"/>
        <dbReference type="ChEBI" id="CHEBI:57384"/>
        <dbReference type="ChEBI" id="CHEBI:83144"/>
        <dbReference type="ChEBI" id="CHEBI:83145"/>
        <dbReference type="EC" id="2.1.3.15"/>
    </reaction>
</comment>
<comment type="cofactor">
    <cofactor evidence="1">
        <name>Zn(2+)</name>
        <dbReference type="ChEBI" id="CHEBI:29105"/>
    </cofactor>
    <text evidence="1">Binds 1 zinc ion per subunit.</text>
</comment>
<comment type="pathway">
    <text evidence="1">Lipid metabolism; malonyl-CoA biosynthesis; malonyl-CoA from acetyl-CoA: step 1/1.</text>
</comment>
<comment type="subunit">
    <text evidence="1">Acetyl-CoA carboxylase is a heterohexamer composed of biotin carboxyl carrier protein (AccB), biotin carboxylase (AccC) and two subunits each of ACCase subunit alpha (AccA) and ACCase subunit beta (AccD).</text>
</comment>
<comment type="subcellular location">
    <subcellularLocation>
        <location evidence="1">Cytoplasm</location>
    </subcellularLocation>
</comment>
<comment type="similarity">
    <text evidence="1">Belongs to the AccD/PCCB family.</text>
</comment>